<organism>
    <name type="scientific">Homo sapiens</name>
    <name type="common">Human</name>
    <dbReference type="NCBI Taxonomy" id="9606"/>
    <lineage>
        <taxon>Eukaryota</taxon>
        <taxon>Metazoa</taxon>
        <taxon>Chordata</taxon>
        <taxon>Craniata</taxon>
        <taxon>Vertebrata</taxon>
        <taxon>Euteleostomi</taxon>
        <taxon>Mammalia</taxon>
        <taxon>Eutheria</taxon>
        <taxon>Euarchontoglires</taxon>
        <taxon>Primates</taxon>
        <taxon>Haplorrhini</taxon>
        <taxon>Catarrhini</taxon>
        <taxon>Hominidae</taxon>
        <taxon>Homo</taxon>
    </lineage>
</organism>
<proteinExistence type="evidence at protein level"/>
<name>RAB5A_HUMAN</name>
<evidence type="ECO:0000250" key="1">
    <source>
        <dbReference type="UniProtKB" id="P18066"/>
    </source>
</evidence>
<evidence type="ECO:0000250" key="2">
    <source>
        <dbReference type="UniProtKB" id="Q0IIG7"/>
    </source>
</evidence>
<evidence type="ECO:0000250" key="3">
    <source>
        <dbReference type="UniProtKB" id="Q9CQD1"/>
    </source>
</evidence>
<evidence type="ECO:0000256" key="4">
    <source>
        <dbReference type="SAM" id="MobiDB-lite"/>
    </source>
</evidence>
<evidence type="ECO:0000269" key="5">
    <source>
    </source>
</evidence>
<evidence type="ECO:0000269" key="6">
    <source>
    </source>
</evidence>
<evidence type="ECO:0000269" key="7">
    <source>
    </source>
</evidence>
<evidence type="ECO:0000269" key="8">
    <source>
    </source>
</evidence>
<evidence type="ECO:0000269" key="9">
    <source>
    </source>
</evidence>
<evidence type="ECO:0000269" key="10">
    <source>
    </source>
</evidence>
<evidence type="ECO:0000269" key="11">
    <source>
    </source>
</evidence>
<evidence type="ECO:0000269" key="12">
    <source>
    </source>
</evidence>
<evidence type="ECO:0000269" key="13">
    <source>
    </source>
</evidence>
<evidence type="ECO:0000269" key="14">
    <source>
    </source>
</evidence>
<evidence type="ECO:0000269" key="15">
    <source>
    </source>
</evidence>
<evidence type="ECO:0000269" key="16">
    <source>
    </source>
</evidence>
<evidence type="ECO:0000269" key="17">
    <source>
    </source>
</evidence>
<evidence type="ECO:0000269" key="18">
    <source>
    </source>
</evidence>
<evidence type="ECO:0000269" key="19">
    <source>
    </source>
</evidence>
<evidence type="ECO:0000269" key="20">
    <source>
    </source>
</evidence>
<evidence type="ECO:0000269" key="21">
    <source>
    </source>
</evidence>
<evidence type="ECO:0000269" key="22">
    <source>
    </source>
</evidence>
<evidence type="ECO:0000269" key="23">
    <source>
    </source>
</evidence>
<evidence type="ECO:0000269" key="24">
    <source>
    </source>
</evidence>
<evidence type="ECO:0000269" key="25">
    <source>
    </source>
</evidence>
<evidence type="ECO:0000269" key="26">
    <source>
    </source>
</evidence>
<evidence type="ECO:0000269" key="27">
    <source>
    </source>
</evidence>
<evidence type="ECO:0000269" key="28">
    <source>
    </source>
</evidence>
<evidence type="ECO:0000303" key="29">
    <source>
    </source>
</evidence>
<evidence type="ECO:0000305" key="30"/>
<evidence type="ECO:0000305" key="31">
    <source>
    </source>
</evidence>
<evidence type="ECO:0000305" key="32">
    <source>
    </source>
</evidence>
<evidence type="ECO:0000312" key="33">
    <source>
        <dbReference type="HGNC" id="HGNC:9783"/>
    </source>
</evidence>
<evidence type="ECO:0007744" key="34">
    <source>
        <dbReference type="PDB" id="1N6H"/>
    </source>
</evidence>
<evidence type="ECO:0007744" key="35">
    <source>
        <dbReference type="PDB" id="1N6I"/>
    </source>
</evidence>
<evidence type="ECO:0007744" key="36">
    <source>
        <dbReference type="PDB" id="1N6K"/>
    </source>
</evidence>
<evidence type="ECO:0007744" key="37">
    <source>
        <dbReference type="PDB" id="1N6L"/>
    </source>
</evidence>
<evidence type="ECO:0007744" key="38">
    <source>
        <dbReference type="PDB" id="1N6N"/>
    </source>
</evidence>
<evidence type="ECO:0007744" key="39">
    <source>
        <dbReference type="PDB" id="1N6O"/>
    </source>
</evidence>
<evidence type="ECO:0007744" key="40">
    <source>
        <dbReference type="PDB" id="1N6P"/>
    </source>
</evidence>
<evidence type="ECO:0007744" key="41">
    <source>
        <dbReference type="PDB" id="1N6R"/>
    </source>
</evidence>
<evidence type="ECO:0007744" key="42">
    <source>
        <dbReference type="PDB" id="1R2Q"/>
    </source>
</evidence>
<evidence type="ECO:0007744" key="43">
    <source>
        <dbReference type="PDB" id="1TU3"/>
    </source>
</evidence>
<evidence type="ECO:0007744" key="44">
    <source>
        <dbReference type="PDB" id="1TU4"/>
    </source>
</evidence>
<evidence type="ECO:0007744" key="45">
    <source>
        <dbReference type="PDB" id="3MJH"/>
    </source>
</evidence>
<evidence type="ECO:0007829" key="46">
    <source>
        <dbReference type="PDB" id="1N6K"/>
    </source>
</evidence>
<evidence type="ECO:0007829" key="47">
    <source>
        <dbReference type="PDB" id="1R2Q"/>
    </source>
</evidence>
<keyword id="KW-0002">3D-structure</keyword>
<keyword id="KW-0025">Alternative splicing</keyword>
<keyword id="KW-1003">Cell membrane</keyword>
<keyword id="KW-0966">Cell projection</keyword>
<keyword id="KW-0963">Cytoplasm</keyword>
<keyword id="KW-0968">Cytoplasmic vesicle</keyword>
<keyword id="KW-0254">Endocytosis</keyword>
<keyword id="KW-0967">Endosome</keyword>
<keyword id="KW-0325">Glycoprotein</keyword>
<keyword id="KW-0342">GTP-binding</keyword>
<keyword id="KW-0378">Hydrolase</keyword>
<keyword id="KW-0449">Lipoprotein</keyword>
<keyword id="KW-0472">Membrane</keyword>
<keyword id="KW-0547">Nucleotide-binding</keyword>
<keyword id="KW-0581">Phagocytosis</keyword>
<keyword id="KW-0597">Phosphoprotein</keyword>
<keyword id="KW-0636">Prenylation</keyword>
<keyword id="KW-0653">Protein transport</keyword>
<keyword id="KW-1267">Proteomics identification</keyword>
<keyword id="KW-1185">Reference proteome</keyword>
<keyword id="KW-0813">Transport</keyword>
<comment type="function">
    <text evidence="3 6 10 12 13 16 20">The small GTPases Rab are key regulators of intracellular membrane trafficking, from the formation of transport vesicles to their fusion with membranes. Rabs cycle between an inactive GDP-bound form and an active GTP-bound form that is able to recruit to membranes different sets of downstream effectors directly responsible for vesicle formation, movement, tethering and fusion. RAB5A is required for the fusion of plasma membranes and early endosomes (PubMed:10818110, PubMed:14617813, PubMed:15378032, PubMed:16410077). Contributes to the regulation of filopodia extension (PubMed:14978216). Required for the exosomal release of SDCBP, CD63, PDCD6IP and syndecan (PubMed:22660413). Regulates maturation of apoptotic cell-containing phagosomes, probably downstream of DYN2 and PIK3C3 (By similarity).</text>
</comment>
<comment type="catalytic activity">
    <reaction evidence="13">
        <text>GTP + H2O = GDP + phosphate + H(+)</text>
        <dbReference type="Rhea" id="RHEA:19669"/>
        <dbReference type="ChEBI" id="CHEBI:15377"/>
        <dbReference type="ChEBI" id="CHEBI:15378"/>
        <dbReference type="ChEBI" id="CHEBI:37565"/>
        <dbReference type="ChEBI" id="CHEBI:43474"/>
        <dbReference type="ChEBI" id="CHEBI:58189"/>
        <dbReference type="EC" id="3.6.5.2"/>
    </reaction>
    <physiologicalReaction direction="left-to-right" evidence="31">
        <dbReference type="Rhea" id="RHEA:19670"/>
    </physiologicalReaction>
</comment>
<comment type="cofactor">
    <cofactor evidence="9 11 13 18">
        <name>Mg(2+)</name>
        <dbReference type="ChEBI" id="CHEBI:18420"/>
    </cofactor>
</comment>
<comment type="activity regulation">
    <text evidence="1 30">Regulated by guanine nucleotide exchange factors (GEFs) including RINL, which promote the exchange of bound GDP for free GTP (By similarity). Regulated by GTPase activating proteins (GAPs) which increase the GTP hydrolysis activity (Probable). Inhibited by GDP dissociation inhibitors (GDIs) (Probable).</text>
</comment>
<comment type="subunit">
    <text evidence="1 2 3 5 6 7 8 10 11 13 14 15 16 18 19 22 23 24 26 27">Interacts with SGSM1 and SGSM3 (By similarity). Interacts with PIK3CB (By similarity). Interacts with GDI1; this promotes dissociation from membranes; phosphorylation at Ser-84 disrupts this interaction (PubMed:23815289, PubMed:29125462). Interacts with GDI2; phosphorylation at Ser-84 disrupts the interaction (PubMed:29125462). Interacts with EEA1 (PubMed:10491193, PubMed:20534488). Interacts with RIN1 and GAPVD1, which regulate its pathway, probably by acting as a GEF (PubMed:11703925, PubMed:16410077). Interacts with RINL. Interacts with ALS2CL, SUN2, ZFYVE20 and RUFY1 (PubMed:10818110, PubMed:11062261, PubMed:14617813, PubMed:15388334, PubMed:16034420). Interacts with RABEP1; one RABEP1 homodimer binds two RAB5A chains, but at opposite sides of the dimer (PubMed:15378032). Interacts with OCRL (PubMed:25869668). Interacts with INPP5F. May be a component of a complex composed of RAB5A, DYN2 and PIK3C3 (By similarity). Does not interact with BLOC-3 complex (heterodimer of HPS1 and HPS4) (By similarity). Interacts with CLN5 (PubMed:22431521). Interacts with APPL2 (By similarity). Interacts with F8A1/F8A2/F8A3 (By similarity). Found in a complex with F8A1/F8A2/F8A3, HTT and RAB5A; mediates the recruitment of HTT by RAB5A onto early endosomes (By similarity). Interacts with ATP9A (PubMed:36604604). Interacts with PPP1R21; mediates the recruitment of FERRY complex by RAB5A onto early endosomes (PubMed:37267906).</text>
</comment>
<comment type="interaction">
    <interactant intactId="EBI-399437">
        <id>P20339</id>
    </interactant>
    <interactant intactId="EBI-1044902">
        <id>Q96Q42</id>
        <label>ALS2</label>
    </interactant>
    <organismsDiffer>false</organismsDiffer>
    <experiments>2</experiments>
</comment>
<comment type="interaction">
    <interactant intactId="EBI-399437">
        <id>P20339</id>
    </interactant>
    <interactant intactId="EBI-2513908">
        <id>Q9P2R3</id>
        <label>ANKFY1</label>
    </interactant>
    <organismsDiffer>false</organismsDiffer>
    <experiments>2</experiments>
</comment>
<comment type="interaction">
    <interactant intactId="EBI-399437">
        <id>P20339</id>
    </interactant>
    <interactant intactId="EBI-741243">
        <id>Q9UKG1</id>
        <label>APPL1</label>
    </interactant>
    <organismsDiffer>false</organismsDiffer>
    <experiments>23</experiments>
</comment>
<comment type="interaction">
    <interactant intactId="EBI-399437">
        <id>P20339</id>
    </interactant>
    <interactant intactId="EBI-747505">
        <id>Q8TAB5</id>
        <label>C1orf216</label>
    </interactant>
    <organismsDiffer>false</organismsDiffer>
    <experiments>3</experiments>
</comment>
<comment type="interaction">
    <interactant intactId="EBI-399437">
        <id>P20339</id>
    </interactant>
    <interactant intactId="EBI-1383687">
        <id>Q9UQM7</id>
        <label>CAMK2A</label>
    </interactant>
    <organismsDiffer>false</organismsDiffer>
    <experiments>3</experiments>
</comment>
<comment type="interaction">
    <interactant intactId="EBI-399437">
        <id>P20339</id>
    </interactant>
    <interactant intactId="EBI-744556">
        <id>Q96HB5</id>
        <label>CCDC120</label>
    </interactant>
    <organismsDiffer>false</organismsDiffer>
    <experiments>3</experiments>
</comment>
<comment type="interaction">
    <interactant intactId="EBI-399437">
        <id>P20339</id>
    </interactant>
    <interactant intactId="EBI-744045">
        <id>Q9Y3D0</id>
        <label>CIAO2B</label>
    </interactant>
    <organismsDiffer>false</organismsDiffer>
    <experiments>3</experiments>
</comment>
<comment type="interaction">
    <interactant intactId="EBI-399437">
        <id>P20339</id>
    </interactant>
    <interactant intactId="EBI-298113">
        <id>Q15075</id>
        <label>EEA1</label>
    </interactant>
    <organismsDiffer>false</organismsDiffer>
    <experiments>4</experiments>
</comment>
<comment type="interaction">
    <interactant intactId="EBI-399437">
        <id>P20339</id>
    </interactant>
    <interactant intactId="EBI-81610">
        <id>O15287</id>
        <label>FANCG</label>
    </interactant>
    <organismsDiffer>false</organismsDiffer>
    <experiments>3</experiments>
</comment>
<comment type="interaction">
    <interactant intactId="EBI-399437">
        <id>P20339</id>
    </interactant>
    <interactant intactId="EBI-744302">
        <id>P14136</id>
        <label>GFAP</label>
    </interactant>
    <organismsDiffer>false</organismsDiffer>
    <experiments>3</experiments>
</comment>
<comment type="interaction">
    <interactant intactId="EBI-399437">
        <id>P20339</id>
    </interactant>
    <interactant intactId="EBI-6509505">
        <id>Q0VD86</id>
        <label>INCA1</label>
    </interactant>
    <organismsDiffer>false</organismsDiffer>
    <experiments>3</experiments>
</comment>
<comment type="interaction">
    <interactant intactId="EBI-399437">
        <id>P20339</id>
    </interactant>
    <interactant intactId="EBI-715385">
        <id>Q6IAA8</id>
        <label>LAMTOR1</label>
    </interactant>
    <organismsDiffer>false</organismsDiffer>
    <experiments>3</experiments>
</comment>
<comment type="interaction">
    <interactant intactId="EBI-399437">
        <id>P20339</id>
    </interactant>
    <interactant intactId="EBI-25830459">
        <id>Q6ZQX7-4</id>
        <label>LIAT1</label>
    </interactant>
    <organismsDiffer>false</organismsDiffer>
    <experiments>3</experiments>
</comment>
<comment type="interaction">
    <interactant intactId="EBI-399437">
        <id>P20339</id>
    </interactant>
    <interactant intactId="EBI-10182361">
        <id>Q9NS73-5</id>
        <label>MBIP</label>
    </interactant>
    <organismsDiffer>false</organismsDiffer>
    <experiments>3</experiments>
</comment>
<comment type="interaction">
    <interactant intactId="EBI-399437">
        <id>P20339</id>
    </interactant>
    <interactant intactId="EBI-6148898">
        <id>Q01968</id>
        <label>OCRL</label>
    </interactant>
    <organismsDiffer>false</organismsDiffer>
    <experiments>11</experiments>
</comment>
<comment type="interaction">
    <interactant intactId="EBI-399437">
        <id>P20339</id>
    </interactant>
    <interactant intactId="EBI-10171633">
        <id>Q96PV4</id>
        <label>PNMA5</label>
    </interactant>
    <organismsDiffer>false</organismsDiffer>
    <experiments>3</experiments>
</comment>
<comment type="interaction">
    <interactant intactId="EBI-399437">
        <id>P20339</id>
    </interactant>
    <interactant intactId="EBI-5235703">
        <id>Q6ZMI0</id>
        <label>PPP1R21</label>
    </interactant>
    <organismsDiffer>false</organismsDiffer>
    <experiments>2</experiments>
</comment>
<comment type="interaction">
    <interactant intactId="EBI-399437">
        <id>P20339</id>
    </interactant>
    <interactant intactId="EBI-1044964">
        <id>Q9UH99</id>
        <label>SUN2</label>
    </interactant>
    <organismsDiffer>false</organismsDiffer>
    <experiments>6</experiments>
</comment>
<comment type="interaction">
    <interactant intactId="EBI-399437">
        <id>P20339</id>
    </interactant>
    <interactant intactId="EBI-11285923">
        <id>Q9H7C4</id>
        <label>SYNC</label>
    </interactant>
    <organismsDiffer>false</organismsDiffer>
    <experiments>3</experiments>
</comment>
<comment type="interaction">
    <interactant intactId="EBI-399437">
        <id>P20339</id>
    </interactant>
    <interactant intactId="EBI-11123832">
        <id>O60506-4</id>
        <label>SYNCRIP</label>
    </interactant>
    <organismsDiffer>false</organismsDiffer>
    <experiments>3</experiments>
</comment>
<comment type="interaction">
    <interactant intactId="EBI-399437">
        <id>P20339</id>
    </interactant>
    <interactant intactId="EBI-954089">
        <id>O15273</id>
        <label>TCAP</label>
    </interactant>
    <organismsDiffer>false</organismsDiffer>
    <experiments>3</experiments>
</comment>
<comment type="interaction">
    <interactant intactId="EBI-399437">
        <id>P20339</id>
    </interactant>
    <interactant intactId="EBI-12000326">
        <id>P15923-3</id>
        <label>TCF3</label>
    </interactant>
    <organismsDiffer>false</organismsDiffer>
    <experiments>3</experiments>
</comment>
<comment type="interaction">
    <interactant intactId="EBI-399437">
        <id>P20339</id>
    </interactant>
    <interactant intactId="EBI-717634">
        <id>P17024</id>
        <label>ZNF20</label>
    </interactant>
    <organismsDiffer>false</organismsDiffer>
    <experiments>3</experiments>
</comment>
<comment type="interaction">
    <interactant intactId="EBI-399437">
        <id>P20339</id>
    </interactant>
    <interactant intactId="EBI-520244">
        <id>P23727</id>
        <label>PIK3R1</label>
    </interactant>
    <organismsDiffer>true</organismsDiffer>
    <experiments>5</experiments>
</comment>
<comment type="subcellular location">
    <subcellularLocation>
        <location evidence="22">Cell membrane</location>
        <topology evidence="32">Lipid-anchor</topology>
        <orientation evidence="21">Cytoplasmic side</orientation>
    </subcellularLocation>
    <subcellularLocation>
        <location evidence="22 23">Early endosome membrane</location>
        <topology evidence="32">Lipid-anchor</topology>
    </subcellularLocation>
    <subcellularLocation>
        <location evidence="17">Melanosome</location>
    </subcellularLocation>
    <subcellularLocation>
        <location evidence="6">Cytoplasmic vesicle</location>
    </subcellularLocation>
    <subcellularLocation>
        <location evidence="1">Cell projection</location>
        <location evidence="1">Ruffle</location>
    </subcellularLocation>
    <subcellularLocation>
        <location evidence="22">Membrane</location>
    </subcellularLocation>
    <subcellularLocation>
        <location evidence="21">Cytoplasm</location>
        <location evidence="21">Cytosol</location>
    </subcellularLocation>
    <subcellularLocation>
        <location evidence="3">Cytoplasmic vesicle</location>
        <location evidence="3">Phagosome membrane</location>
    </subcellularLocation>
    <subcellularLocation>
        <location evidence="19 21">Endosome membrane</location>
    </subcellularLocation>
    <text evidence="17 30">Enriched in stage I melanosomes (PubMed:17081065). Alternates between membrane-bound and cytosolic forms (Probable).</text>
</comment>
<comment type="alternative products">
    <event type="alternative splicing"/>
    <isoform>
        <id>P20339-1</id>
        <name>1</name>
        <sequence type="displayed"/>
    </isoform>
    <isoform>
        <id>P20339-2</id>
        <name>2</name>
        <sequence type="described" ref="VSP_055830"/>
    </isoform>
</comment>
<comment type="domain">
    <text evidence="18">Switch 1, switch 2 and the interswitch regions are characteristic of Rab GTPases and mediate the interactions with Rab downstream effectors. The switch regions undergo conformational changes upon nucleotide binding which drive interaction with specific sets of effector proteins, with most effectors only binding to GTP-bound Rab.</text>
</comment>
<comment type="PTM">
    <text evidence="24">Phosphorylation of Ser-84 in the switch II region by LRRK2 prevents the association of RAB regulatory proteins, including RAB GDP dissociation inhibitors GDI1 and GDI2.</text>
</comment>
<comment type="PTM">
    <text evidence="25">(Microbial infection) Glycosylated on arginine residues by S.typhimurium protein Ssek3.</text>
</comment>
<comment type="similarity">
    <text evidence="30">Belongs to the small GTPase superfamily. Rab family.</text>
</comment>
<dbReference type="EC" id="3.6.5.2" evidence="13"/>
<dbReference type="EMBL" id="M28215">
    <property type="protein sequence ID" value="AAA60245.1"/>
    <property type="molecule type" value="mRNA"/>
</dbReference>
<dbReference type="EMBL" id="AF464088">
    <property type="protein sequence ID" value="AAO15677.1"/>
    <property type="molecule type" value="mRNA"/>
</dbReference>
<dbReference type="EMBL" id="AF498936">
    <property type="protein sequence ID" value="AAM21084.1"/>
    <property type="molecule type" value="mRNA"/>
</dbReference>
<dbReference type="EMBL" id="AK295992">
    <property type="protein sequence ID" value="BAG58767.1"/>
    <property type="molecule type" value="mRNA"/>
</dbReference>
<dbReference type="EMBL" id="AK312618">
    <property type="protein sequence ID" value="BAG35504.1"/>
    <property type="molecule type" value="mRNA"/>
</dbReference>
<dbReference type="EMBL" id="CR536492">
    <property type="protein sequence ID" value="CAG38731.1"/>
    <property type="molecule type" value="mRNA"/>
</dbReference>
<dbReference type="EMBL" id="AC097635">
    <property type="status" value="NOT_ANNOTATED_CDS"/>
    <property type="molecule type" value="Genomic_DNA"/>
</dbReference>
<dbReference type="EMBL" id="CH471055">
    <property type="protein sequence ID" value="EAW64301.1"/>
    <property type="molecule type" value="Genomic_DNA"/>
</dbReference>
<dbReference type="EMBL" id="BC001267">
    <property type="protein sequence ID" value="AAH01267.1"/>
    <property type="molecule type" value="mRNA"/>
</dbReference>
<dbReference type="EMBL" id="BC018288">
    <property type="protein sequence ID" value="AAH18288.1"/>
    <property type="molecule type" value="mRNA"/>
</dbReference>
<dbReference type="CCDS" id="CCDS2633.1">
    <molecule id="P20339-1"/>
</dbReference>
<dbReference type="CCDS" id="CCDS77710.1">
    <molecule id="P20339-2"/>
</dbReference>
<dbReference type="PIR" id="F34323">
    <property type="entry name" value="F34323"/>
</dbReference>
<dbReference type="RefSeq" id="NP_001278977.1">
    <molecule id="P20339-2"/>
    <property type="nucleotide sequence ID" value="NM_001292048.2"/>
</dbReference>
<dbReference type="RefSeq" id="NP_004153.2">
    <molecule id="P20339-1"/>
    <property type="nucleotide sequence ID" value="NM_004162.4"/>
</dbReference>
<dbReference type="PDB" id="1N6H">
    <property type="method" value="X-ray"/>
    <property type="resolution" value="1.51 A"/>
    <property type="chains" value="A=15-184"/>
</dbReference>
<dbReference type="PDB" id="1N6I">
    <property type="method" value="X-ray"/>
    <property type="resolution" value="1.60 A"/>
    <property type="chains" value="A=15-184"/>
</dbReference>
<dbReference type="PDB" id="1N6K">
    <property type="method" value="X-ray"/>
    <property type="resolution" value="1.55 A"/>
    <property type="chains" value="A=15-184"/>
</dbReference>
<dbReference type="PDB" id="1N6L">
    <property type="method" value="X-ray"/>
    <property type="resolution" value="1.60 A"/>
    <property type="chains" value="A=15-184"/>
</dbReference>
<dbReference type="PDB" id="1N6N">
    <property type="method" value="X-ray"/>
    <property type="resolution" value="1.60 A"/>
    <property type="chains" value="A=15-184"/>
</dbReference>
<dbReference type="PDB" id="1N6O">
    <property type="method" value="X-ray"/>
    <property type="resolution" value="1.80 A"/>
    <property type="chains" value="A=15-184"/>
</dbReference>
<dbReference type="PDB" id="1N6P">
    <property type="method" value="X-ray"/>
    <property type="resolution" value="1.54 A"/>
    <property type="chains" value="A=15-184"/>
</dbReference>
<dbReference type="PDB" id="1N6R">
    <property type="method" value="X-ray"/>
    <property type="resolution" value="1.55 A"/>
    <property type="chains" value="A=15-184"/>
</dbReference>
<dbReference type="PDB" id="1R2Q">
    <property type="method" value="X-ray"/>
    <property type="resolution" value="1.05 A"/>
    <property type="chains" value="A=15-184"/>
</dbReference>
<dbReference type="PDB" id="1TU3">
    <property type="method" value="X-ray"/>
    <property type="resolution" value="2.31 A"/>
    <property type="chains" value="A/B/C/D/E=15-184"/>
</dbReference>
<dbReference type="PDB" id="1TU4">
    <property type="method" value="X-ray"/>
    <property type="resolution" value="2.20 A"/>
    <property type="chains" value="A/B/C/D=15-184"/>
</dbReference>
<dbReference type="PDB" id="3MJH">
    <property type="method" value="X-ray"/>
    <property type="resolution" value="2.03 A"/>
    <property type="chains" value="A/C=16-183"/>
</dbReference>
<dbReference type="PDB" id="4Q9U">
    <property type="method" value="X-ray"/>
    <property type="resolution" value="4.62 A"/>
    <property type="chains" value="B/F=15-184"/>
</dbReference>
<dbReference type="PDB" id="7BL1">
    <property type="method" value="EM"/>
    <property type="resolution" value="9.80 A"/>
    <property type="chains" value="DDD=16-183"/>
</dbReference>
<dbReference type="PDBsum" id="1N6H"/>
<dbReference type="PDBsum" id="1N6I"/>
<dbReference type="PDBsum" id="1N6K"/>
<dbReference type="PDBsum" id="1N6L"/>
<dbReference type="PDBsum" id="1N6N"/>
<dbReference type="PDBsum" id="1N6O"/>
<dbReference type="PDBsum" id="1N6P"/>
<dbReference type="PDBsum" id="1N6R"/>
<dbReference type="PDBsum" id="1R2Q"/>
<dbReference type="PDBsum" id="1TU3"/>
<dbReference type="PDBsum" id="1TU4"/>
<dbReference type="PDBsum" id="3MJH"/>
<dbReference type="PDBsum" id="4Q9U"/>
<dbReference type="PDBsum" id="7BL1"/>
<dbReference type="EMDB" id="EMD-12214"/>
<dbReference type="EMDB" id="EMD-12237"/>
<dbReference type="EMDB" id="EMD-12238"/>
<dbReference type="SMR" id="P20339"/>
<dbReference type="BioGRID" id="111806">
    <property type="interactions" value="724"/>
</dbReference>
<dbReference type="CORUM" id="P20339"/>
<dbReference type="DIP" id="DIP-380N"/>
<dbReference type="FunCoup" id="P20339">
    <property type="interactions" value="3602"/>
</dbReference>
<dbReference type="IntAct" id="P20339">
    <property type="interactions" value="301"/>
</dbReference>
<dbReference type="MINT" id="P20339"/>
<dbReference type="STRING" id="9606.ENSP00000273047"/>
<dbReference type="DrugBank" id="DB04315">
    <property type="generic name" value="Guanosine-5'-Diphosphate"/>
</dbReference>
<dbReference type="DrugBank" id="DB04137">
    <property type="generic name" value="Guanosine-5'-Triphosphate"/>
</dbReference>
<dbReference type="DrugBank" id="DB02467">
    <property type="generic name" value="L-methionine (S)-S-oxide"/>
</dbReference>
<dbReference type="GlyCosmos" id="P20339">
    <property type="glycosylation" value="1 site, No reported glycans"/>
</dbReference>
<dbReference type="GlyGen" id="P20339">
    <property type="glycosylation" value="1 site, 1 O-linked glycan (1 site)"/>
</dbReference>
<dbReference type="iPTMnet" id="P20339"/>
<dbReference type="MetOSite" id="P20339"/>
<dbReference type="PhosphoSitePlus" id="P20339"/>
<dbReference type="SwissPalm" id="P20339"/>
<dbReference type="BioMuta" id="RAB5A"/>
<dbReference type="DMDM" id="1346958"/>
<dbReference type="jPOST" id="P20339"/>
<dbReference type="MassIVE" id="P20339"/>
<dbReference type="PaxDb" id="9606-ENSP00000273047"/>
<dbReference type="PeptideAtlas" id="P20339"/>
<dbReference type="ProteomicsDB" id="4362"/>
<dbReference type="ProteomicsDB" id="53751">
    <molecule id="P20339-1"/>
</dbReference>
<dbReference type="Pumba" id="P20339"/>
<dbReference type="TopDownProteomics" id="P20339-1">
    <molecule id="P20339-1"/>
</dbReference>
<dbReference type="Antibodypedia" id="3882">
    <property type="antibodies" value="741 antibodies from 41 providers"/>
</dbReference>
<dbReference type="DNASU" id="5868"/>
<dbReference type="Ensembl" id="ENST00000273047.9">
    <molecule id="P20339-1"/>
    <property type="protein sequence ID" value="ENSP00000273047.4"/>
    <property type="gene ID" value="ENSG00000144566.11"/>
</dbReference>
<dbReference type="Ensembl" id="ENST00000422242.1">
    <molecule id="P20339-2"/>
    <property type="protein sequence ID" value="ENSP00000411941.1"/>
    <property type="gene ID" value="ENSG00000144566.11"/>
</dbReference>
<dbReference type="GeneID" id="5868"/>
<dbReference type="KEGG" id="hsa:5868"/>
<dbReference type="MANE-Select" id="ENST00000273047.9">
    <property type="protein sequence ID" value="ENSP00000273047.4"/>
    <property type="RefSeq nucleotide sequence ID" value="NM_004162.5"/>
    <property type="RefSeq protein sequence ID" value="NP_004153.2"/>
</dbReference>
<dbReference type="UCSC" id="uc003cbn.4">
    <molecule id="P20339-1"/>
    <property type="organism name" value="human"/>
</dbReference>
<dbReference type="AGR" id="HGNC:9783"/>
<dbReference type="CTD" id="5868"/>
<dbReference type="DisGeNET" id="5868"/>
<dbReference type="GeneCards" id="RAB5A"/>
<dbReference type="HGNC" id="HGNC:9783">
    <property type="gene designation" value="RAB5A"/>
</dbReference>
<dbReference type="HPA" id="ENSG00000144566">
    <property type="expression patterns" value="Low tissue specificity"/>
</dbReference>
<dbReference type="MIM" id="179512">
    <property type="type" value="gene"/>
</dbReference>
<dbReference type="neXtProt" id="NX_P20339"/>
<dbReference type="OpenTargets" id="ENSG00000144566"/>
<dbReference type="PharmGKB" id="PA34143"/>
<dbReference type="VEuPathDB" id="HostDB:ENSG00000144566"/>
<dbReference type="eggNOG" id="KOG0092">
    <property type="taxonomic scope" value="Eukaryota"/>
</dbReference>
<dbReference type="GeneTree" id="ENSGT00940000154337"/>
<dbReference type="HOGENOM" id="CLU_041217_10_2_1"/>
<dbReference type="InParanoid" id="P20339"/>
<dbReference type="OMA" id="GASFFRY"/>
<dbReference type="OrthoDB" id="63533at2759"/>
<dbReference type="PAN-GO" id="P20339">
    <property type="GO annotations" value="13 GO annotations based on evolutionary models"/>
</dbReference>
<dbReference type="PhylomeDB" id="P20339"/>
<dbReference type="TreeFam" id="TF300199"/>
<dbReference type="PathwayCommons" id="P20339"/>
<dbReference type="Reactome" id="R-HSA-1660499">
    <property type="pathway name" value="Synthesis of PIPs at the plasma membrane"/>
</dbReference>
<dbReference type="Reactome" id="R-HSA-8854214">
    <property type="pathway name" value="TBC/RABGAPs"/>
</dbReference>
<dbReference type="Reactome" id="R-HSA-8856828">
    <property type="pathway name" value="Clathrin-mediated endocytosis"/>
</dbReference>
<dbReference type="Reactome" id="R-HSA-8873719">
    <property type="pathway name" value="RAB geranylgeranylation"/>
</dbReference>
<dbReference type="Reactome" id="R-HSA-8876198">
    <property type="pathway name" value="RAB GEFs exchange GTP for GDP on RABs"/>
</dbReference>
<dbReference type="Reactome" id="R-HSA-9636383">
    <property type="pathway name" value="Prevention of phagosomal-lysosomal fusion"/>
</dbReference>
<dbReference type="Reactome" id="R-HSA-9820960">
    <property type="pathway name" value="Respiratory syncytial virus (RSV) attachment and entry"/>
</dbReference>
<dbReference type="Reactome" id="R-HSA-983231">
    <property type="pathway name" value="Factors involved in megakaryocyte development and platelet production"/>
</dbReference>
<dbReference type="SignaLink" id="P20339"/>
<dbReference type="SIGNOR" id="P20339"/>
<dbReference type="BioGRID-ORCS" id="5868">
    <property type="hits" value="26 hits in 1164 CRISPR screens"/>
</dbReference>
<dbReference type="CD-CODE" id="FB4E32DD">
    <property type="entry name" value="Presynaptic clusters and postsynaptic densities"/>
</dbReference>
<dbReference type="ChiTaRS" id="RAB5A">
    <property type="organism name" value="human"/>
</dbReference>
<dbReference type="EvolutionaryTrace" id="P20339"/>
<dbReference type="GeneWiki" id="RAB5A"/>
<dbReference type="GenomeRNAi" id="5868"/>
<dbReference type="Pharos" id="P20339">
    <property type="development level" value="Tbio"/>
</dbReference>
<dbReference type="PRO" id="PR:P20339"/>
<dbReference type="Proteomes" id="UP000005640">
    <property type="component" value="Chromosome 3"/>
</dbReference>
<dbReference type="RNAct" id="P20339">
    <property type="molecule type" value="protein"/>
</dbReference>
<dbReference type="Bgee" id="ENSG00000144566">
    <property type="expression patterns" value="Expressed in gingival epithelium and 210 other cell types or tissues"/>
</dbReference>
<dbReference type="ExpressionAtlas" id="P20339">
    <property type="expression patterns" value="baseline and differential"/>
</dbReference>
<dbReference type="GO" id="GO:0015629">
    <property type="term" value="C:actin cytoskeleton"/>
    <property type="evidence" value="ECO:0007669"/>
    <property type="project" value="Ensembl"/>
</dbReference>
<dbReference type="GO" id="GO:0030424">
    <property type="term" value="C:axon"/>
    <property type="evidence" value="ECO:0000250"/>
    <property type="project" value="ParkinsonsUK-UCL"/>
</dbReference>
<dbReference type="GO" id="GO:0043679">
    <property type="term" value="C:axon terminus"/>
    <property type="evidence" value="ECO:0000250"/>
    <property type="project" value="ParkinsonsUK-UCL"/>
</dbReference>
<dbReference type="GO" id="GO:0030669">
    <property type="term" value="C:clathrin-coated endocytic vesicle membrane"/>
    <property type="evidence" value="ECO:0000304"/>
    <property type="project" value="Reactome"/>
</dbReference>
<dbReference type="GO" id="GO:0005737">
    <property type="term" value="C:cytoplasm"/>
    <property type="evidence" value="ECO:0000314"/>
    <property type="project" value="UniProtKB"/>
</dbReference>
<dbReference type="GO" id="GO:0098559">
    <property type="term" value="C:cytoplasmic side of early endosome membrane"/>
    <property type="evidence" value="ECO:0000315"/>
    <property type="project" value="UniProtKB"/>
</dbReference>
<dbReference type="GO" id="GO:0005829">
    <property type="term" value="C:cytosol"/>
    <property type="evidence" value="ECO:0000314"/>
    <property type="project" value="UniProtKB"/>
</dbReference>
<dbReference type="GO" id="GO:0030425">
    <property type="term" value="C:dendrite"/>
    <property type="evidence" value="ECO:0000250"/>
    <property type="project" value="ParkinsonsUK-UCL"/>
</dbReference>
<dbReference type="GO" id="GO:0005769">
    <property type="term" value="C:early endosome"/>
    <property type="evidence" value="ECO:0000314"/>
    <property type="project" value="UniProtKB"/>
</dbReference>
<dbReference type="GO" id="GO:0031901">
    <property type="term" value="C:early endosome membrane"/>
    <property type="evidence" value="ECO:0000304"/>
    <property type="project" value="Reactome"/>
</dbReference>
<dbReference type="GO" id="GO:0032009">
    <property type="term" value="C:early phagosome"/>
    <property type="evidence" value="ECO:0000250"/>
    <property type="project" value="UniProtKB"/>
</dbReference>
<dbReference type="GO" id="GO:0030139">
    <property type="term" value="C:endocytic vesicle"/>
    <property type="evidence" value="ECO:0000318"/>
    <property type="project" value="GO_Central"/>
</dbReference>
<dbReference type="GO" id="GO:0012505">
    <property type="term" value="C:endomembrane system"/>
    <property type="evidence" value="ECO:0000318"/>
    <property type="project" value="GO_Central"/>
</dbReference>
<dbReference type="GO" id="GO:0005768">
    <property type="term" value="C:endosome"/>
    <property type="evidence" value="ECO:0000250"/>
    <property type="project" value="ParkinsonsUK-UCL"/>
</dbReference>
<dbReference type="GO" id="GO:0010008">
    <property type="term" value="C:endosome membrane"/>
    <property type="evidence" value="ECO:0000314"/>
    <property type="project" value="UniProtKB"/>
</dbReference>
<dbReference type="GO" id="GO:0070062">
    <property type="term" value="C:extracellular exosome"/>
    <property type="evidence" value="ECO:0007005"/>
    <property type="project" value="UniProtKB"/>
</dbReference>
<dbReference type="GO" id="GO:0043231">
    <property type="term" value="C:intracellular membrane-bounded organelle"/>
    <property type="evidence" value="ECO:0000314"/>
    <property type="project" value="HPA"/>
</dbReference>
<dbReference type="GO" id="GO:0042470">
    <property type="term" value="C:melanosome"/>
    <property type="evidence" value="ECO:0007669"/>
    <property type="project" value="UniProtKB-SubCell"/>
</dbReference>
<dbReference type="GO" id="GO:0045121">
    <property type="term" value="C:membrane raft"/>
    <property type="evidence" value="ECO:0007669"/>
    <property type="project" value="Ensembl"/>
</dbReference>
<dbReference type="GO" id="GO:0043025">
    <property type="term" value="C:neuronal cell body"/>
    <property type="evidence" value="ECO:0000250"/>
    <property type="project" value="ParkinsonsUK-UCL"/>
</dbReference>
<dbReference type="GO" id="GO:0005654">
    <property type="term" value="C:nucleoplasm"/>
    <property type="evidence" value="ECO:0000314"/>
    <property type="project" value="HPA"/>
</dbReference>
<dbReference type="GO" id="GO:0045335">
    <property type="term" value="C:phagocytic vesicle"/>
    <property type="evidence" value="ECO:0000250"/>
    <property type="project" value="UniProtKB"/>
</dbReference>
<dbReference type="GO" id="GO:0030670">
    <property type="term" value="C:phagocytic vesicle membrane"/>
    <property type="evidence" value="ECO:0007669"/>
    <property type="project" value="UniProtKB-SubCell"/>
</dbReference>
<dbReference type="GO" id="GO:0005886">
    <property type="term" value="C:plasma membrane"/>
    <property type="evidence" value="ECO:0000318"/>
    <property type="project" value="GO_Central"/>
</dbReference>
<dbReference type="GO" id="GO:0001726">
    <property type="term" value="C:ruffle"/>
    <property type="evidence" value="ECO:0007669"/>
    <property type="project" value="UniProtKB-SubCell"/>
</dbReference>
<dbReference type="GO" id="GO:0036477">
    <property type="term" value="C:somatodendritic compartment"/>
    <property type="evidence" value="ECO:0000314"/>
    <property type="project" value="ParkinsonsUK-UCL"/>
</dbReference>
<dbReference type="GO" id="GO:0008021">
    <property type="term" value="C:synaptic vesicle"/>
    <property type="evidence" value="ECO:0000250"/>
    <property type="project" value="ParkinsonsUK-UCL"/>
</dbReference>
<dbReference type="GO" id="GO:0030672">
    <property type="term" value="C:synaptic vesicle membrane"/>
    <property type="evidence" value="ECO:0000318"/>
    <property type="project" value="GO_Central"/>
</dbReference>
<dbReference type="GO" id="GO:0043195">
    <property type="term" value="C:terminal bouton"/>
    <property type="evidence" value="ECO:0000314"/>
    <property type="project" value="ParkinsonsUK-UCL"/>
</dbReference>
<dbReference type="GO" id="GO:0003925">
    <property type="term" value="F:G protein activity"/>
    <property type="evidence" value="ECO:0007669"/>
    <property type="project" value="UniProtKB-EC"/>
</dbReference>
<dbReference type="GO" id="GO:0019003">
    <property type="term" value="F:GDP binding"/>
    <property type="evidence" value="ECO:0000314"/>
    <property type="project" value="UniProtKB"/>
</dbReference>
<dbReference type="GO" id="GO:0005525">
    <property type="term" value="F:GTP binding"/>
    <property type="evidence" value="ECO:0000314"/>
    <property type="project" value="UniProtKB"/>
</dbReference>
<dbReference type="GO" id="GO:0003924">
    <property type="term" value="F:GTPase activity"/>
    <property type="evidence" value="ECO:0000314"/>
    <property type="project" value="UniProtKB"/>
</dbReference>
<dbReference type="GO" id="GO:0150093">
    <property type="term" value="P:amyloid-beta clearance by transcytosis"/>
    <property type="evidence" value="ECO:0000316"/>
    <property type="project" value="ARUK-UCL"/>
</dbReference>
<dbReference type="GO" id="GO:0060070">
    <property type="term" value="P:canonical Wnt signaling pathway"/>
    <property type="evidence" value="ECO:0000314"/>
    <property type="project" value="BHF-UCL"/>
</dbReference>
<dbReference type="GO" id="GO:0045022">
    <property type="term" value="P:early endosome to late endosome transport"/>
    <property type="evidence" value="ECO:0000315"/>
    <property type="project" value="UniProtKB"/>
</dbReference>
<dbReference type="GO" id="GO:0006897">
    <property type="term" value="P:endocytosis"/>
    <property type="evidence" value="ECO:0000314"/>
    <property type="project" value="UniProtKB"/>
</dbReference>
<dbReference type="GO" id="GO:0006886">
    <property type="term" value="P:intracellular protein transport"/>
    <property type="evidence" value="ECO:0000318"/>
    <property type="project" value="GO_Central"/>
</dbReference>
<dbReference type="GO" id="GO:0044788">
    <property type="term" value="P:modulation by host of viral process"/>
    <property type="evidence" value="ECO:0000315"/>
    <property type="project" value="ParkinsonsUK-UCL"/>
</dbReference>
<dbReference type="GO" id="GO:0006909">
    <property type="term" value="P:phagocytosis"/>
    <property type="evidence" value="ECO:0007669"/>
    <property type="project" value="UniProtKB-KW"/>
</dbReference>
<dbReference type="GO" id="GO:0045921">
    <property type="term" value="P:positive regulation of exocytosis"/>
    <property type="evidence" value="ECO:0000315"/>
    <property type="project" value="UniProtKB"/>
</dbReference>
<dbReference type="GO" id="GO:0031623">
    <property type="term" value="P:receptor internalization"/>
    <property type="evidence" value="ECO:0000315"/>
    <property type="project" value="BHF-UCL"/>
</dbReference>
<dbReference type="GO" id="GO:2000785">
    <property type="term" value="P:regulation of autophagosome assembly"/>
    <property type="evidence" value="ECO:0000304"/>
    <property type="project" value="ParkinsonsUK-UCL"/>
</dbReference>
<dbReference type="GO" id="GO:0051036">
    <property type="term" value="P:regulation of endosome size"/>
    <property type="evidence" value="ECO:0000315"/>
    <property type="project" value="UniProtKB"/>
</dbReference>
<dbReference type="GO" id="GO:0051489">
    <property type="term" value="P:regulation of filopodium assembly"/>
    <property type="evidence" value="ECO:0000314"/>
    <property type="project" value="UniProtKB"/>
</dbReference>
<dbReference type="GO" id="GO:0048169">
    <property type="term" value="P:regulation of long-term neuronal synaptic plasticity"/>
    <property type="evidence" value="ECO:0000318"/>
    <property type="project" value="GO_Central"/>
</dbReference>
<dbReference type="GO" id="GO:2000300">
    <property type="term" value="P:regulation of synaptic vesicle exocytosis"/>
    <property type="evidence" value="ECO:0000315"/>
    <property type="project" value="ParkinsonsUK-UCL"/>
</dbReference>
<dbReference type="GO" id="GO:0036465">
    <property type="term" value="P:synaptic vesicle recycling"/>
    <property type="evidence" value="ECO:0000314"/>
    <property type="project" value="ParkinsonsUK-UCL"/>
</dbReference>
<dbReference type="CDD" id="cd01860">
    <property type="entry name" value="Rab5_related"/>
    <property type="match status" value="1"/>
</dbReference>
<dbReference type="FunFam" id="3.40.50.300:FF:000180">
    <property type="entry name" value="Member RAS oncogene family"/>
    <property type="match status" value="1"/>
</dbReference>
<dbReference type="Gene3D" id="3.40.50.300">
    <property type="entry name" value="P-loop containing nucleotide triphosphate hydrolases"/>
    <property type="match status" value="1"/>
</dbReference>
<dbReference type="InterPro" id="IPR027417">
    <property type="entry name" value="P-loop_NTPase"/>
</dbReference>
<dbReference type="InterPro" id="IPR005225">
    <property type="entry name" value="Small_GTP-bd"/>
</dbReference>
<dbReference type="InterPro" id="IPR001806">
    <property type="entry name" value="Small_GTPase"/>
</dbReference>
<dbReference type="NCBIfam" id="TIGR00231">
    <property type="entry name" value="small_GTP"/>
    <property type="match status" value="1"/>
</dbReference>
<dbReference type="PANTHER" id="PTHR47978">
    <property type="match status" value="1"/>
</dbReference>
<dbReference type="Pfam" id="PF00071">
    <property type="entry name" value="Ras"/>
    <property type="match status" value="1"/>
</dbReference>
<dbReference type="PRINTS" id="PR00449">
    <property type="entry name" value="RASTRNSFRMNG"/>
</dbReference>
<dbReference type="SMART" id="SM00175">
    <property type="entry name" value="RAB"/>
    <property type="match status" value="1"/>
</dbReference>
<dbReference type="SMART" id="SM00176">
    <property type="entry name" value="RAN"/>
    <property type="match status" value="1"/>
</dbReference>
<dbReference type="SMART" id="SM00173">
    <property type="entry name" value="RAS"/>
    <property type="match status" value="1"/>
</dbReference>
<dbReference type="SMART" id="SM00174">
    <property type="entry name" value="RHO"/>
    <property type="match status" value="1"/>
</dbReference>
<dbReference type="SUPFAM" id="SSF52540">
    <property type="entry name" value="P-loop containing nucleoside triphosphate hydrolases"/>
    <property type="match status" value="1"/>
</dbReference>
<dbReference type="PROSITE" id="PS51419">
    <property type="entry name" value="RAB"/>
    <property type="match status" value="1"/>
</dbReference>
<protein>
    <recommendedName>
        <fullName>Ras-related protein Rab-5A</fullName>
        <ecNumber evidence="13">3.6.5.2</ecNumber>
    </recommendedName>
</protein>
<accession>P20339</accession>
<accession>B4DJA5</accession>
<accession>Q6FI44</accession>
<gene>
    <name evidence="33" type="primary">RAB5A</name>
    <name type="synonym">RAB5</name>
</gene>
<reference key="1">
    <citation type="journal article" date="1989" name="J. Biol. Chem.">
        <title>The human Rab genes encode a family of GTP-binding proteins related to yeast YPT1 and SEC4 products involved in secretion.</title>
        <authorList>
            <person name="Zahraoui A."/>
            <person name="Touchot N."/>
            <person name="Chardin P."/>
            <person name="Tavitian A."/>
        </authorList>
    </citation>
    <scope>NUCLEOTIDE SEQUENCE [MRNA] (ISOFORM 1)</scope>
</reference>
<reference key="2">
    <citation type="journal article" date="1994" name="Proc. Natl. Acad. Sci. U.S.A.">
        <title>Rab geranylgeranyl transferase catalyzes the geranylgeranylation of adjacent cysteines in the small GTPases Rab1A, Rab3A, and Rab5A.</title>
        <authorList>
            <person name="Farnsworth C.C."/>
            <person name="Seabra M.C."/>
            <person name="Ericsson L.H."/>
            <person name="Gelb M.H."/>
            <person name="Glomset J.A."/>
        </authorList>
    </citation>
    <scope>NUCLEOTIDE SEQUENCE [MRNA] (ISOFORM 1)</scope>
    <scope>ISOPRENYLATION AT CYS-212 AND CYS-213</scope>
    <scope>IDENTIFICATION BY MASS SPECTROMETRY</scope>
</reference>
<reference key="3">
    <citation type="submission" date="2001-12" db="EMBL/GenBank/DDBJ databases">
        <title>Identification of a new oncogene in human cancers.</title>
        <authorList>
            <person name="Kim J.W."/>
        </authorList>
    </citation>
    <scope>NUCLEOTIDE SEQUENCE [LARGE SCALE MRNA] (ISOFORM 1)</scope>
</reference>
<reference key="4">
    <citation type="submission" date="2002-04" db="EMBL/GenBank/DDBJ databases">
        <title>cDNA clones of human proteins involved in signal transduction sequenced by the Guthrie cDNA resource center (www.cdna.org).</title>
        <authorList>
            <person name="Puhl H.L. III"/>
            <person name="Ikeda S.R."/>
            <person name="Aronstam R.S."/>
        </authorList>
    </citation>
    <scope>NUCLEOTIDE SEQUENCE [LARGE SCALE MRNA] (ISOFORM 1)</scope>
    <source>
        <tissue>Brain</tissue>
    </source>
</reference>
<reference key="5">
    <citation type="journal article" date="2004" name="Nat. Genet.">
        <title>Complete sequencing and characterization of 21,243 full-length human cDNAs.</title>
        <authorList>
            <person name="Ota T."/>
            <person name="Suzuki Y."/>
            <person name="Nishikawa T."/>
            <person name="Otsuki T."/>
            <person name="Sugiyama T."/>
            <person name="Irie R."/>
            <person name="Wakamatsu A."/>
            <person name="Hayashi K."/>
            <person name="Sato H."/>
            <person name="Nagai K."/>
            <person name="Kimura K."/>
            <person name="Makita H."/>
            <person name="Sekine M."/>
            <person name="Obayashi M."/>
            <person name="Nishi T."/>
            <person name="Shibahara T."/>
            <person name="Tanaka T."/>
            <person name="Ishii S."/>
            <person name="Yamamoto J."/>
            <person name="Saito K."/>
            <person name="Kawai Y."/>
            <person name="Isono Y."/>
            <person name="Nakamura Y."/>
            <person name="Nagahari K."/>
            <person name="Murakami K."/>
            <person name="Yasuda T."/>
            <person name="Iwayanagi T."/>
            <person name="Wagatsuma M."/>
            <person name="Shiratori A."/>
            <person name="Sudo H."/>
            <person name="Hosoiri T."/>
            <person name="Kaku Y."/>
            <person name="Kodaira H."/>
            <person name="Kondo H."/>
            <person name="Sugawara M."/>
            <person name="Takahashi M."/>
            <person name="Kanda K."/>
            <person name="Yokoi T."/>
            <person name="Furuya T."/>
            <person name="Kikkawa E."/>
            <person name="Omura Y."/>
            <person name="Abe K."/>
            <person name="Kamihara K."/>
            <person name="Katsuta N."/>
            <person name="Sato K."/>
            <person name="Tanikawa M."/>
            <person name="Yamazaki M."/>
            <person name="Ninomiya K."/>
            <person name="Ishibashi T."/>
            <person name="Yamashita H."/>
            <person name="Murakawa K."/>
            <person name="Fujimori K."/>
            <person name="Tanai H."/>
            <person name="Kimata M."/>
            <person name="Watanabe M."/>
            <person name="Hiraoka S."/>
            <person name="Chiba Y."/>
            <person name="Ishida S."/>
            <person name="Ono Y."/>
            <person name="Takiguchi S."/>
            <person name="Watanabe S."/>
            <person name="Yosida M."/>
            <person name="Hotuta T."/>
            <person name="Kusano J."/>
            <person name="Kanehori K."/>
            <person name="Takahashi-Fujii A."/>
            <person name="Hara H."/>
            <person name="Tanase T.-O."/>
            <person name="Nomura Y."/>
            <person name="Togiya S."/>
            <person name="Komai F."/>
            <person name="Hara R."/>
            <person name="Takeuchi K."/>
            <person name="Arita M."/>
            <person name="Imose N."/>
            <person name="Musashino K."/>
            <person name="Yuuki H."/>
            <person name="Oshima A."/>
            <person name="Sasaki N."/>
            <person name="Aotsuka S."/>
            <person name="Yoshikawa Y."/>
            <person name="Matsunawa H."/>
            <person name="Ichihara T."/>
            <person name="Shiohata N."/>
            <person name="Sano S."/>
            <person name="Moriya S."/>
            <person name="Momiyama H."/>
            <person name="Satoh N."/>
            <person name="Takami S."/>
            <person name="Terashima Y."/>
            <person name="Suzuki O."/>
            <person name="Nakagawa S."/>
            <person name="Senoh A."/>
            <person name="Mizoguchi H."/>
            <person name="Goto Y."/>
            <person name="Shimizu F."/>
            <person name="Wakebe H."/>
            <person name="Hishigaki H."/>
            <person name="Watanabe T."/>
            <person name="Sugiyama A."/>
            <person name="Takemoto M."/>
            <person name="Kawakami B."/>
            <person name="Yamazaki M."/>
            <person name="Watanabe K."/>
            <person name="Kumagai A."/>
            <person name="Itakura S."/>
            <person name="Fukuzumi Y."/>
            <person name="Fujimori Y."/>
            <person name="Komiyama M."/>
            <person name="Tashiro H."/>
            <person name="Tanigami A."/>
            <person name="Fujiwara T."/>
            <person name="Ono T."/>
            <person name="Yamada K."/>
            <person name="Fujii Y."/>
            <person name="Ozaki K."/>
            <person name="Hirao M."/>
            <person name="Ohmori Y."/>
            <person name="Kawabata A."/>
            <person name="Hikiji T."/>
            <person name="Kobatake N."/>
            <person name="Inagaki H."/>
            <person name="Ikema Y."/>
            <person name="Okamoto S."/>
            <person name="Okitani R."/>
            <person name="Kawakami T."/>
            <person name="Noguchi S."/>
            <person name="Itoh T."/>
            <person name="Shigeta K."/>
            <person name="Senba T."/>
            <person name="Matsumura K."/>
            <person name="Nakajima Y."/>
            <person name="Mizuno T."/>
            <person name="Morinaga M."/>
            <person name="Sasaki M."/>
            <person name="Togashi T."/>
            <person name="Oyama M."/>
            <person name="Hata H."/>
            <person name="Watanabe M."/>
            <person name="Komatsu T."/>
            <person name="Mizushima-Sugano J."/>
            <person name="Satoh T."/>
            <person name="Shirai Y."/>
            <person name="Takahashi Y."/>
            <person name="Nakagawa K."/>
            <person name="Okumura K."/>
            <person name="Nagase T."/>
            <person name="Nomura N."/>
            <person name="Kikuchi H."/>
            <person name="Masuho Y."/>
            <person name="Yamashita R."/>
            <person name="Nakai K."/>
            <person name="Yada T."/>
            <person name="Nakamura Y."/>
            <person name="Ohara O."/>
            <person name="Isogai T."/>
            <person name="Sugano S."/>
        </authorList>
    </citation>
    <scope>NUCLEOTIDE SEQUENCE [LARGE SCALE MRNA] (ISOFORMS 1 AND 2)</scope>
    <source>
        <tissue>Brain</tissue>
        <tissue>Subthalamic nucleus</tissue>
    </source>
</reference>
<reference key="6">
    <citation type="submission" date="2004-06" db="EMBL/GenBank/DDBJ databases">
        <title>Cloning of human full open reading frames in Gateway(TM) system entry vector (pDONR201).</title>
        <authorList>
            <person name="Ebert L."/>
            <person name="Schick M."/>
            <person name="Neubert P."/>
            <person name="Schatten R."/>
            <person name="Henze S."/>
            <person name="Korn B."/>
        </authorList>
    </citation>
    <scope>NUCLEOTIDE SEQUENCE [LARGE SCALE MRNA] (ISOFORM 1)</scope>
</reference>
<reference key="7">
    <citation type="journal article" date="2006" name="Nature">
        <title>The DNA sequence, annotation and analysis of human chromosome 3.</title>
        <authorList>
            <person name="Muzny D.M."/>
            <person name="Scherer S.E."/>
            <person name="Kaul R."/>
            <person name="Wang J."/>
            <person name="Yu J."/>
            <person name="Sudbrak R."/>
            <person name="Buhay C.J."/>
            <person name="Chen R."/>
            <person name="Cree A."/>
            <person name="Ding Y."/>
            <person name="Dugan-Rocha S."/>
            <person name="Gill R."/>
            <person name="Gunaratne P."/>
            <person name="Harris R.A."/>
            <person name="Hawes A.C."/>
            <person name="Hernandez J."/>
            <person name="Hodgson A.V."/>
            <person name="Hume J."/>
            <person name="Jackson A."/>
            <person name="Khan Z.M."/>
            <person name="Kovar-Smith C."/>
            <person name="Lewis L.R."/>
            <person name="Lozado R.J."/>
            <person name="Metzker M.L."/>
            <person name="Milosavljevic A."/>
            <person name="Miner G.R."/>
            <person name="Morgan M.B."/>
            <person name="Nazareth L.V."/>
            <person name="Scott G."/>
            <person name="Sodergren E."/>
            <person name="Song X.-Z."/>
            <person name="Steffen D."/>
            <person name="Wei S."/>
            <person name="Wheeler D.A."/>
            <person name="Wright M.W."/>
            <person name="Worley K.C."/>
            <person name="Yuan Y."/>
            <person name="Zhang Z."/>
            <person name="Adams C.Q."/>
            <person name="Ansari-Lari M.A."/>
            <person name="Ayele M."/>
            <person name="Brown M.J."/>
            <person name="Chen G."/>
            <person name="Chen Z."/>
            <person name="Clendenning J."/>
            <person name="Clerc-Blankenburg K.P."/>
            <person name="Chen R."/>
            <person name="Chen Z."/>
            <person name="Davis C."/>
            <person name="Delgado O."/>
            <person name="Dinh H.H."/>
            <person name="Dong W."/>
            <person name="Draper H."/>
            <person name="Ernst S."/>
            <person name="Fu G."/>
            <person name="Gonzalez-Garay M.L."/>
            <person name="Garcia D.K."/>
            <person name="Gillett W."/>
            <person name="Gu J."/>
            <person name="Hao B."/>
            <person name="Haugen E."/>
            <person name="Havlak P."/>
            <person name="He X."/>
            <person name="Hennig S."/>
            <person name="Hu S."/>
            <person name="Huang W."/>
            <person name="Jackson L.R."/>
            <person name="Jacob L.S."/>
            <person name="Kelly S.H."/>
            <person name="Kube M."/>
            <person name="Levy R."/>
            <person name="Li Z."/>
            <person name="Liu B."/>
            <person name="Liu J."/>
            <person name="Liu W."/>
            <person name="Lu J."/>
            <person name="Maheshwari M."/>
            <person name="Nguyen B.-V."/>
            <person name="Okwuonu G.O."/>
            <person name="Palmeiri A."/>
            <person name="Pasternak S."/>
            <person name="Perez L.M."/>
            <person name="Phelps K.A."/>
            <person name="Plopper F.J."/>
            <person name="Qiang B."/>
            <person name="Raymond C."/>
            <person name="Rodriguez R."/>
            <person name="Saenphimmachak C."/>
            <person name="Santibanez J."/>
            <person name="Shen H."/>
            <person name="Shen Y."/>
            <person name="Subramanian S."/>
            <person name="Tabor P.E."/>
            <person name="Verduzco D."/>
            <person name="Waldron L."/>
            <person name="Wang J."/>
            <person name="Wang J."/>
            <person name="Wang Q."/>
            <person name="Williams G.A."/>
            <person name="Wong G.K.-S."/>
            <person name="Yao Z."/>
            <person name="Zhang J."/>
            <person name="Zhang X."/>
            <person name="Zhao G."/>
            <person name="Zhou J."/>
            <person name="Zhou Y."/>
            <person name="Nelson D."/>
            <person name="Lehrach H."/>
            <person name="Reinhardt R."/>
            <person name="Naylor S.L."/>
            <person name="Yang H."/>
            <person name="Olson M."/>
            <person name="Weinstock G."/>
            <person name="Gibbs R.A."/>
        </authorList>
    </citation>
    <scope>NUCLEOTIDE SEQUENCE [LARGE SCALE GENOMIC DNA]</scope>
</reference>
<reference key="8">
    <citation type="submission" date="2005-07" db="EMBL/GenBank/DDBJ databases">
        <authorList>
            <person name="Mural R.J."/>
            <person name="Istrail S."/>
            <person name="Sutton G."/>
            <person name="Florea L."/>
            <person name="Halpern A.L."/>
            <person name="Mobarry C.M."/>
            <person name="Lippert R."/>
            <person name="Walenz B."/>
            <person name="Shatkay H."/>
            <person name="Dew I."/>
            <person name="Miller J.R."/>
            <person name="Flanigan M.J."/>
            <person name="Edwards N.J."/>
            <person name="Bolanos R."/>
            <person name="Fasulo D."/>
            <person name="Halldorsson B.V."/>
            <person name="Hannenhalli S."/>
            <person name="Turner R."/>
            <person name="Yooseph S."/>
            <person name="Lu F."/>
            <person name="Nusskern D.R."/>
            <person name="Shue B.C."/>
            <person name="Zheng X.H."/>
            <person name="Zhong F."/>
            <person name="Delcher A.L."/>
            <person name="Huson D.H."/>
            <person name="Kravitz S.A."/>
            <person name="Mouchard L."/>
            <person name="Reinert K."/>
            <person name="Remington K.A."/>
            <person name="Clark A.G."/>
            <person name="Waterman M.S."/>
            <person name="Eichler E.E."/>
            <person name="Adams M.D."/>
            <person name="Hunkapiller M.W."/>
            <person name="Myers E.W."/>
            <person name="Venter J.C."/>
        </authorList>
    </citation>
    <scope>NUCLEOTIDE SEQUENCE [LARGE SCALE GENOMIC DNA]</scope>
</reference>
<reference key="9">
    <citation type="journal article" date="2004" name="Genome Res.">
        <title>The status, quality, and expansion of the NIH full-length cDNA project: the Mammalian Gene Collection (MGC).</title>
        <authorList>
            <consortium name="The MGC Project Team"/>
        </authorList>
    </citation>
    <scope>NUCLEOTIDE SEQUENCE [LARGE SCALE MRNA] (ISOFORM 1)</scope>
    <source>
        <tissue>Cervix</tissue>
        <tissue>Placenta</tissue>
    </source>
</reference>
<reference key="10">
    <citation type="journal article" date="1999" name="Eur. J. Biochem.">
        <title>Direct interaction of EEA1 with Rab5b.</title>
        <authorList>
            <person name="Callaghan J.M."/>
            <person name="Nixon S."/>
            <person name="Bucci C."/>
            <person name="Toh B.-H."/>
            <person name="Stenmark H."/>
        </authorList>
    </citation>
    <scope>INTERACTION WITH EEA1</scope>
</reference>
<reference key="11">
    <citation type="journal article" date="2000" name="J. Biol. Chem.">
        <title>A novel membrane-anchored Rab5 interacting protein required for homotypic endosome fusion.</title>
        <authorList>
            <person name="Hoffenberg S."/>
            <person name="Liu X."/>
            <person name="Nikolova L."/>
            <person name="Hall H.S."/>
            <person name="Dai W."/>
            <person name="Baughn R.E."/>
            <person name="Dickey B.F."/>
            <person name="Barbieri M.A."/>
            <person name="Aballay A."/>
            <person name="Stahl P.D."/>
            <person name="Knoll B.J."/>
        </authorList>
    </citation>
    <scope>INTERACTION WITH SUN2</scope>
    <scope>FUNCTION</scope>
    <scope>SUBCELLULAR LOCATION</scope>
</reference>
<reference key="12">
    <citation type="journal article" date="2000" name="J. Cell Biol.">
        <title>Rabenosyn-5, a novel Rab5 effector, is complexed with hVPS45 and recruited to endosomes through a FYVE finger domain.</title>
        <authorList>
            <person name="Nielsen E."/>
            <person name="Christoforidis S."/>
            <person name="Uttenweiler-Joseph S."/>
            <person name="Miaczynska M."/>
            <person name="Dewitte F."/>
            <person name="Wilm M."/>
            <person name="Hoflack B."/>
            <person name="Zerial M."/>
        </authorList>
    </citation>
    <scope>INTERACTION WITH ZFYVE20</scope>
    <source>
        <tissue>Cervix carcinoma</tissue>
    </source>
</reference>
<reference key="13">
    <citation type="journal article" date="2001" name="Dev. Cell">
        <title>Ras-activated endocytosis is mediated by the Rab5 guanine nucleotide exchange activity of RIN1.</title>
        <authorList>
            <person name="Tall G.G."/>
            <person name="Barbieri M.A."/>
            <person name="Stahl P.D."/>
            <person name="Horazdovsky B.F."/>
        </authorList>
    </citation>
    <scope>ACTIVATION BY RIN1</scope>
</reference>
<reference key="14">
    <citation type="journal article" date="2004" name="FEBS Lett.">
        <title>ALS2CL, the novel protein highly homologous to the carboxy-terminal half of ALS2, binds to Rab5 and modulates endosome dynamics.</title>
        <authorList>
            <person name="Hadano S."/>
            <person name="Otomo A."/>
            <person name="Suzuki-Utsunomiya K."/>
            <person name="Kunita R."/>
            <person name="Yanagisawa Y."/>
            <person name="Showguchi-Miyata J."/>
            <person name="Mizumura H."/>
            <person name="Ikeda J.-E."/>
        </authorList>
    </citation>
    <scope>INTERACTION WITH ALS2CL</scope>
</reference>
<reference key="15">
    <citation type="journal article" date="2004" name="Mol. Biol. Cell">
        <title>Rabip4' is an effector of rab5 and rab4 and regulates transport through early endosomes.</title>
        <authorList>
            <person name="Fouraux M.A."/>
            <person name="Deneka M."/>
            <person name="Ivan V."/>
            <person name="van der Heijden A."/>
            <person name="Raymackers J."/>
            <person name="van Suylekom D."/>
            <person name="van Venrooij W.J."/>
            <person name="van der Sluijs P."/>
            <person name="Pruijn G.J.M."/>
        </authorList>
    </citation>
    <scope>FUNCTION</scope>
    <scope>INTERACTION WITH RUFY1</scope>
</reference>
<reference key="16">
    <citation type="journal article" date="2004" name="Mol. Biol. Cell">
        <title>Regulation of dendritic branching and filopodia formation in hippocampal neurons by specific acylated protein motifs.</title>
        <authorList>
            <person name="Gauthier-Campbell C."/>
            <person name="Bredt D.S."/>
            <person name="Murphy T.H."/>
            <person name="El-Husseini A."/>
        </authorList>
    </citation>
    <scope>FUNCTION</scope>
    <scope>MUTAGENESIS OF GLN-79</scope>
</reference>
<reference key="17">
    <citation type="journal article" date="2005" name="Nature">
        <title>Structural basis of family-wide Rab GTPase recognition by rabenosyn-5.</title>
        <authorList>
            <person name="Eathiraj S."/>
            <person name="Pan X."/>
            <person name="Ritacco C."/>
            <person name="Lambright D.G."/>
        </authorList>
    </citation>
    <scope>INTERACTION WITH ZFYVE20</scope>
    <scope>MUTAGENESIS OF GLY-54; ALA-56 AND PHE-57</scope>
</reference>
<reference key="18">
    <citation type="journal article" date="2006" name="Biochem. Biophys. Res. Commun.">
        <title>Rab5-activating protein 6, a novel endosomal protein with a role in endocytosis.</title>
        <authorList>
            <person name="Hunker C.M."/>
            <person name="Galvis A."/>
            <person name="Kruk I."/>
            <person name="Giambini H."/>
            <person name="Veisaga M.L."/>
            <person name="Barbieri M.A."/>
        </authorList>
    </citation>
    <scope>FUNCTION</scope>
    <scope>INTERACTION WITH GAPVD1</scope>
</reference>
<reference key="19">
    <citation type="journal article" date="2006" name="J. Proteome Res.">
        <title>Proteomic and bioinformatic characterization of the biogenesis and function of melanosomes.</title>
        <authorList>
            <person name="Chi A."/>
            <person name="Valencia J.C."/>
            <person name="Hu Z.-Z."/>
            <person name="Watabe H."/>
            <person name="Yamaguchi H."/>
            <person name="Mangini N.J."/>
            <person name="Huang H."/>
            <person name="Canfield V.A."/>
            <person name="Cheng K.C."/>
            <person name="Yang F."/>
            <person name="Abe R."/>
            <person name="Yamagishi S."/>
            <person name="Shabanowitz J."/>
            <person name="Hearing V.J."/>
            <person name="Wu C."/>
            <person name="Appella E."/>
            <person name="Hunt D.F."/>
        </authorList>
    </citation>
    <scope>SUBCELLULAR LOCATION [LARGE SCALE ANALYSIS]</scope>
    <source>
        <tissue>Melanoma</tissue>
    </source>
</reference>
<reference key="20">
    <citation type="journal article" date="2008" name="Proc. Natl. Acad. Sci. U.S.A.">
        <title>A quantitative atlas of mitotic phosphorylation.</title>
        <authorList>
            <person name="Dephoure N."/>
            <person name="Zhou C."/>
            <person name="Villen J."/>
            <person name="Beausoleil S.A."/>
            <person name="Bakalarski C.E."/>
            <person name="Elledge S.J."/>
            <person name="Gygi S.P."/>
        </authorList>
    </citation>
    <scope>IDENTIFICATION BY MASS SPECTROMETRY [LARGE SCALE ANALYSIS]</scope>
    <source>
        <tissue>Cervix carcinoma</tissue>
    </source>
</reference>
<reference key="21">
    <citation type="journal article" date="2011" name="BMC Syst. Biol.">
        <title>Initial characterization of the human central proteome.</title>
        <authorList>
            <person name="Burkard T.R."/>
            <person name="Planyavsky M."/>
            <person name="Kaupe I."/>
            <person name="Breitwieser F.P."/>
            <person name="Buerckstuemmer T."/>
            <person name="Bennett K.L."/>
            <person name="Superti-Furga G."/>
            <person name="Colinge J."/>
        </authorList>
    </citation>
    <scope>IDENTIFICATION BY MASS SPECTROMETRY [LARGE SCALE ANALYSIS]</scope>
</reference>
<reference key="22">
    <citation type="journal article" date="2012" name="Mol. Cell. Biol.">
        <title>The role of ceroid lipofuscinosis neuronal protein 5 (CLN5) in endosomal sorting.</title>
        <authorList>
            <person name="Mamo A."/>
            <person name="Jules F."/>
            <person name="Dumaresq-Doiron K."/>
            <person name="Costantino S."/>
            <person name="Lefrancois S."/>
        </authorList>
    </citation>
    <scope>INTERACTION WITH CLN5</scope>
    <scope>SUBCELLULAR LOCATION</scope>
</reference>
<reference key="23">
    <citation type="journal article" date="2012" name="Nat. Cell Biol.">
        <title>Syndecan-syntenin-ALIX regulates the biogenesis of exosomes.</title>
        <authorList>
            <person name="Baietti M.F."/>
            <person name="Zhang Z."/>
            <person name="Mortier E."/>
            <person name="Melchior A."/>
            <person name="Degeest G."/>
            <person name="Geeraerts A."/>
            <person name="Ivarsson Y."/>
            <person name="Depoortere F."/>
            <person name="Coomans C."/>
            <person name="Vermeiren E."/>
            <person name="Zimmermann P."/>
            <person name="David G."/>
        </authorList>
    </citation>
    <scope>FUNCTION</scope>
</reference>
<reference key="24">
    <citation type="journal article" date="2013" name="J. Cell Biol.">
        <title>RabGEFs are a major determinant for specific Rab membrane targeting.</title>
        <authorList>
            <person name="Bluemer J."/>
            <person name="Rey J."/>
            <person name="Dehmelt L."/>
            <person name="Mazel T."/>
            <person name="Wu Y.W."/>
            <person name="Bastiaens P."/>
            <person name="Goody R.S."/>
            <person name="Itzen A."/>
        </authorList>
    </citation>
    <scope>SUBCELLULAR LOCATION</scope>
</reference>
<reference key="25">
    <citation type="journal article" date="2013" name="Mol. Membr. Biol.">
        <title>Rab1a and Rab5a preferentially bind to binary lipid compositions with higher stored curvature elastic energy.</title>
        <authorList>
            <person name="Kirsten M.L."/>
            <person name="Baron R.A."/>
            <person name="Seabra M.C."/>
            <person name="Ces O."/>
        </authorList>
    </citation>
    <scope>INTERACTION WITH GDI1</scope>
    <scope>SUBCELLULAR LOCATION</scope>
</reference>
<reference key="26">
    <citation type="journal article" date="2015" name="J. Cell Biol.">
        <title>Sac2/INPP5F is an inositol 4-phosphatase that functions in the endocytic pathway.</title>
        <authorList>
            <person name="Nakatsu F."/>
            <person name="Messa M."/>
            <person name="Nandez R."/>
            <person name="Czapla H."/>
            <person name="Zou Y."/>
            <person name="Strittmatter S.M."/>
            <person name="De Camilli P."/>
        </authorList>
    </citation>
    <scope>SUBCELLULAR LOCATION</scope>
    <scope>INTERACTION WITH OCRL</scope>
</reference>
<reference key="27">
    <citation type="journal article" date="2015" name="Proteomics">
        <title>N-terminome analysis of the human mitochondrial proteome.</title>
        <authorList>
            <person name="Vaca Jacome A.S."/>
            <person name="Rabilloud T."/>
            <person name="Schaeffer-Reiss C."/>
            <person name="Rompais M."/>
            <person name="Ayoub D."/>
            <person name="Lane L."/>
            <person name="Bairoch A."/>
            <person name="Van Dorsselaer A."/>
            <person name="Carapito C."/>
        </authorList>
    </citation>
    <scope>IDENTIFICATION BY MASS SPECTROMETRY [LARGE SCALE ANALYSIS]</scope>
</reference>
<reference key="28">
    <citation type="journal article" date="2017" name="Elife">
        <title>Systematic proteomic analysis of LRRK2-mediated Rab GTPase phosphorylation establishes a connection to ciliogenesis.</title>
        <authorList>
            <person name="Steger M."/>
            <person name="Diez F."/>
            <person name="Dhekne H.S."/>
            <person name="Lis P."/>
            <person name="Nirujogi R.S."/>
            <person name="Karayel O."/>
            <person name="Tonelli F."/>
            <person name="Martinez T.N."/>
            <person name="Lorentzen E."/>
            <person name="Pfeffer S.R."/>
            <person name="Alessi D.R."/>
            <person name="Mann M."/>
        </authorList>
    </citation>
    <scope>INTERACTION WITH GDI1 AND GDI2</scope>
    <scope>PHOSPHORYLATION AT SER-84</scope>
    <scope>MUTAGENESIS OF SER-84</scope>
</reference>
<reference key="29">
    <citation type="journal article" date="2020" name="Front. Cell. Infect. Microbiol.">
        <title>The Salmonella effector SseK3 targets small Rab GTPases.</title>
        <authorList>
            <person name="Gan J."/>
            <person name="Scott N.E."/>
            <person name="Newson J.P.M."/>
            <person name="Wibawa R.R."/>
            <person name="Wong Fok Lung T."/>
            <person name="Pollock G.L."/>
            <person name="Ng G.Z."/>
            <person name="van Driel I."/>
            <person name="Pearson J.S."/>
            <person name="Hartland E.L."/>
            <person name="Giogha C."/>
        </authorList>
    </citation>
    <scope>GLYCOSYLATION AT ARG-120 (MICROBIAL INFECTION)</scope>
</reference>
<reference key="30">
    <citation type="journal article" date="2023" name="Mol. Cell">
        <title>Structural basis of mRNA binding by the human FERRY Rab5 effector complex.</title>
        <authorList>
            <person name="Quentin D."/>
            <person name="Schuhmacher J.S."/>
            <person name="Klink B.U."/>
            <person name="Lauer J."/>
            <person name="Shaikh T.R."/>
            <person name="Huis In 't Veld P.J."/>
            <person name="Welp L.M."/>
            <person name="Urlaub H."/>
            <person name="Zerial M."/>
            <person name="Raunser S."/>
        </authorList>
    </citation>
    <scope>INTERACTION WITH PPP1R21</scope>
</reference>
<reference key="31">
    <citation type="journal article" date="2023" name="Mol. Psychiatry">
        <title>ATP9A deficiency causes ADHD and aberrant endosomal recycling via modulating RAB5 and RAB11 activity.</title>
        <authorList>
            <person name="Meng T."/>
            <person name="Chen X."/>
            <person name="He Z."/>
            <person name="Huang H."/>
            <person name="Lin S."/>
            <person name="Liu K."/>
            <person name="Bai G."/>
            <person name="Liu H."/>
            <person name="Xu M."/>
            <person name="Zhuang H."/>
            <person name="Zhang Y."/>
            <person name="Waqas A."/>
            <person name="Liu Q."/>
            <person name="Zhang C."/>
            <person name="Sun X.D."/>
            <person name="Huang H."/>
            <person name="Umair M."/>
            <person name="Yan Y."/>
            <person name="Feng D."/>
        </authorList>
    </citation>
    <scope>INTERACTION WITH ATP9A</scope>
    <scope>MUTAGENESIS OF SER-34</scope>
</reference>
<reference evidence="34 35 36 37 38 39 40 41" key="32">
    <citation type="journal article" date="2003" name="J. Biol. Chem.">
        <title>High resolution crystal structures of human Rab5a and five mutants with substitutions in the catalytically important phosphate-binding loop.</title>
        <authorList>
            <person name="Zhu G."/>
            <person name="Liu J."/>
            <person name="Terzyan S."/>
            <person name="Zhai P."/>
            <person name="Li G."/>
            <person name="Zhang X.C."/>
        </authorList>
    </citation>
    <scope>X-RAY CRYSTALLOGRAPHY (1.51 ANGSTROMS) OF 15-184 IN COMPLEX WITH MG(2+) AND GTP</scope>
    <scope>COFACTOR</scope>
</reference>
<reference evidence="42" key="33">
    <citation type="journal article" date="2004" name="Acta Crystallogr. D">
        <title>Refinement of the structure of human Rab5a GTPase domain at 1.05 A resolution.</title>
        <authorList>
            <person name="Terzyan S."/>
            <person name="Zhu G."/>
            <person name="Li G."/>
            <person name="Zhang X.C."/>
        </authorList>
    </citation>
    <scope>X-RAY CRYSTALLOGRAPHY (1.05 ANGSTROMS) OF 15-184 IN COMPLEX WITH MG(2+) AND GTP ANALOG</scope>
    <scope>COFACTOR</scope>
</reference>
<reference evidence="43 44" key="34">
    <citation type="journal article" date="2004" name="Nat. Struct. Mol. Biol.">
        <title>Structural basis of Rab5-Rabaptin5 interaction in endocytosis.</title>
        <authorList>
            <person name="Zhu G."/>
            <person name="Zhai P."/>
            <person name="Liu J."/>
            <person name="Terzyan S."/>
            <person name="Li G."/>
            <person name="Zhang X.C."/>
        </authorList>
    </citation>
    <scope>X-RAY CRYSTALLOGRAPHY (2.2 ANGSTROMS) OF 15-184 IN COMPLEX WITH MG(2+); GTP ANALOG; GDP AND RABEP1</scope>
    <scope>FUNCTION</scope>
    <scope>INTERACTION WITH RABEP1</scope>
    <scope>MUTAGENESIS OF PHE-57; TRP-74; GLN-79; TYR-82; TYR-89; LYS-116 AND ARG-120</scope>
    <scope>CATALYTIC ACTIVITY</scope>
    <scope>COFACTOR</scope>
</reference>
<reference evidence="45" key="35">
    <citation type="journal article" date="2010" name="Proc. Natl. Acad. Sci. U.S.A.">
        <title>Structural basis for Rab GTPase recognition and endosome tethering by the C2H2 zinc finger of early endosomal autoantigen 1 (EEA1).</title>
        <authorList>
            <person name="Mishra A."/>
            <person name="Eathiraj S."/>
            <person name="Corvera S."/>
            <person name="Lambright D.G."/>
        </authorList>
    </citation>
    <scope>X-RAY CRYSTALLOGRAPHY (2.03 ANGSTROMS) OF 16-183 OF MUTANT LEU-79 IN COMPLEX WITH MG(2+); GTP AND EEA1</scope>
    <scope>INTERACTION WITH EEA1</scope>
    <scope>COFACTOR</scope>
    <scope>DOMAIN</scope>
</reference>
<feature type="chain" id="PRO_0000121104" description="Ras-related protein Rab-5A">
    <location>
        <begin position="1"/>
        <end position="215"/>
    </location>
</feature>
<feature type="region of interest" description="Disordered" evidence="4">
    <location>
        <begin position="181"/>
        <end position="215"/>
    </location>
</feature>
<feature type="short sequence motif" description="Switch 1" evidence="18 45">
    <location>
        <begin position="44"/>
        <end position="56"/>
    </location>
</feature>
<feature type="short sequence motif" description="Switch 2" evidence="18 45">
    <location>
        <begin position="77"/>
        <end position="93"/>
    </location>
</feature>
<feature type="compositionally biased region" description="Polar residues" evidence="4">
    <location>
        <begin position="203"/>
        <end position="215"/>
    </location>
</feature>
<feature type="binding site" evidence="9 18 37 45">
    <location>
        <position position="29"/>
    </location>
    <ligand>
        <name>GTP</name>
        <dbReference type="ChEBI" id="CHEBI:37565"/>
    </ligand>
</feature>
<feature type="binding site" evidence="18 45">
    <location>
        <position position="30"/>
    </location>
    <ligand>
        <name>GTP</name>
        <dbReference type="ChEBI" id="CHEBI:37565"/>
    </ligand>
</feature>
<feature type="binding site" evidence="9 18 37 45">
    <location>
        <position position="32"/>
    </location>
    <ligand>
        <name>GTP</name>
        <dbReference type="ChEBI" id="CHEBI:37565"/>
    </ligand>
</feature>
<feature type="binding site" evidence="9 18 37 45">
    <location>
        <position position="33"/>
    </location>
    <ligand>
        <name>GTP</name>
        <dbReference type="ChEBI" id="CHEBI:37565"/>
    </ligand>
</feature>
<feature type="binding site" evidence="9 18 37 45">
    <location>
        <position position="34"/>
    </location>
    <ligand>
        <name>GTP</name>
        <dbReference type="ChEBI" id="CHEBI:37565"/>
    </ligand>
</feature>
<feature type="binding site" evidence="9 11 13 18 34 35 36 37 38 39 40 41 42 43 45">
    <location>
        <position position="34"/>
    </location>
    <ligand>
        <name>Mg(2+)</name>
        <dbReference type="ChEBI" id="CHEBI:18420"/>
    </ligand>
</feature>
<feature type="binding site" evidence="9 18 37 45">
    <location>
        <position position="35"/>
    </location>
    <ligand>
        <name>GTP</name>
        <dbReference type="ChEBI" id="CHEBI:37565"/>
    </ligand>
</feature>
<feature type="binding site" evidence="9 18 37 45">
    <location>
        <position position="46"/>
    </location>
    <ligand>
        <name>GTP</name>
        <dbReference type="ChEBI" id="CHEBI:37565"/>
    </ligand>
</feature>
<feature type="binding site" evidence="9 18 37 45">
    <location>
        <position position="47"/>
    </location>
    <ligand>
        <name>GTP</name>
        <dbReference type="ChEBI" id="CHEBI:37565"/>
    </ligand>
</feature>
<feature type="binding site" evidence="9 18 37 45">
    <location>
        <position position="52"/>
    </location>
    <ligand>
        <name>GTP</name>
        <dbReference type="ChEBI" id="CHEBI:37565"/>
    </ligand>
</feature>
<feature type="binding site" evidence="9 11 13 18 34 35 36 37 38 39 40 41 42 43 45">
    <location>
        <position position="52"/>
    </location>
    <ligand>
        <name>Mg(2+)</name>
        <dbReference type="ChEBI" id="CHEBI:18420"/>
    </ligand>
</feature>
<feature type="binding site" evidence="9 18 37 45">
    <location>
        <position position="78"/>
    </location>
    <ligand>
        <name>GTP</name>
        <dbReference type="ChEBI" id="CHEBI:37565"/>
    </ligand>
</feature>
<feature type="binding site" evidence="9 18 37 45">
    <location>
        <position position="133"/>
    </location>
    <ligand>
        <name>GTP</name>
        <dbReference type="ChEBI" id="CHEBI:37565"/>
    </ligand>
</feature>
<feature type="binding site" evidence="9 18 37 45">
    <location>
        <position position="134"/>
    </location>
    <ligand>
        <name>GTP</name>
        <dbReference type="ChEBI" id="CHEBI:37565"/>
    </ligand>
</feature>
<feature type="binding site" evidence="9 18 37 45">
    <location>
        <position position="136"/>
    </location>
    <ligand>
        <name>GTP</name>
        <dbReference type="ChEBI" id="CHEBI:37565"/>
    </ligand>
</feature>
<feature type="binding site" evidence="9 18 37 45">
    <location>
        <position position="164"/>
    </location>
    <ligand>
        <name>GTP</name>
        <dbReference type="ChEBI" id="CHEBI:37565"/>
    </ligand>
</feature>
<feature type="binding site" evidence="9 18 37 45">
    <location>
        <position position="165"/>
    </location>
    <ligand>
        <name>GTP</name>
        <dbReference type="ChEBI" id="CHEBI:37565"/>
    </ligand>
</feature>
<feature type="modified residue" description="Phosphoserine; by LRRK2" evidence="24">
    <location>
        <position position="84"/>
    </location>
</feature>
<feature type="lipid moiety-binding region" description="S-geranylgeranyl cysteine" evidence="28">
    <location>
        <position position="212"/>
    </location>
</feature>
<feature type="lipid moiety-binding region" description="S-geranylgeranyl cysteine" evidence="28">
    <location>
        <position position="213"/>
    </location>
</feature>
<feature type="glycosylation site" description="(Microbial infection) N-beta-linked (GlcNAc) arginine" evidence="25">
    <location>
        <position position="120"/>
    </location>
</feature>
<feature type="splice variant" id="VSP_055830" description="In isoform 2." evidence="29">
    <location>
        <begin position="55"/>
        <end position="68"/>
    </location>
</feature>
<feature type="mutagenesis site" description="Increased interaction wih ATP9A." evidence="26">
    <original>S</original>
    <variation>N</variation>
    <location>
        <position position="34"/>
    </location>
</feature>
<feature type="mutagenesis site" description="Strongly decreases ZFYVE20 binding affinity." evidence="15">
    <original>G</original>
    <variation>Q</variation>
    <location>
        <position position="54"/>
    </location>
</feature>
<feature type="mutagenesis site" description="Strongly decreases ZFYVE20 binding affinity." evidence="15">
    <original>A</original>
    <variation>E</variation>
    <location>
        <position position="56"/>
    </location>
</feature>
<feature type="mutagenesis site" description="Strongly decreases RABEP1 and ZFYVE20 binding affinity." evidence="13 15">
    <original>F</original>
    <variation>A</variation>
    <location>
        <position position="57"/>
    </location>
</feature>
<feature type="mutagenesis site" description="Strongly decreases RABEP1 binding affinity." evidence="13">
    <original>W</original>
    <variation>A</variation>
    <location>
        <position position="74"/>
    </location>
</feature>
<feature type="mutagenesis site" description="Loss of GTPase activity. Does not inhibit filopodia formation." evidence="12 13">
    <original>Q</original>
    <variation>L</variation>
    <location>
        <position position="79"/>
    </location>
</feature>
<feature type="mutagenesis site" description="Strongly decreases RABEP1 binding affinity. Impairs endosome fusion." evidence="13">
    <original>Y</original>
    <variation>A</variation>
    <location>
        <position position="82"/>
    </location>
</feature>
<feature type="mutagenesis site" description="Loss of phosphorylation. No effect on GDI1 and GDI2 binding." evidence="24">
    <original>S</original>
    <variation>A</variation>
    <location>
        <position position="84"/>
    </location>
</feature>
<feature type="mutagenesis site" description="Phosphomimetic mutant. Loss of GDI1 and GDI2 binding." evidence="24">
    <original>S</original>
    <variation>E</variation>
    <location>
        <position position="84"/>
    </location>
</feature>
<feature type="mutagenesis site" description="Strongly decreases RABEP1 binding affinity." evidence="13">
    <original>Y</original>
    <variation>A</variation>
    <location>
        <position position="89"/>
    </location>
</feature>
<feature type="mutagenesis site" description="No effect on RABEP1 binding affinity." evidence="13">
    <original>K</original>
    <variation>E</variation>
    <location>
        <position position="116"/>
    </location>
</feature>
<feature type="mutagenesis site" description="No effect on RABEP1 binding affinity." evidence="13">
    <original>R</original>
    <variation>E</variation>
    <location>
        <position position="120"/>
    </location>
</feature>
<feature type="sequence conflict" description="In Ref. 1; AAA60245." evidence="30" ref="1">
    <original>R</original>
    <variation>G</variation>
    <location>
        <position position="81"/>
    </location>
</feature>
<feature type="sequence conflict" description="In Ref. 1; AAA60245." evidence="30" ref="1">
    <original>R</original>
    <variation>G</variation>
    <location>
        <position position="197"/>
    </location>
</feature>
<feature type="strand" evidence="47">
    <location>
        <begin position="17"/>
        <end position="26"/>
    </location>
</feature>
<feature type="strand" evidence="46">
    <location>
        <begin position="28"/>
        <end position="32"/>
    </location>
</feature>
<feature type="helix" evidence="47">
    <location>
        <begin position="33"/>
        <end position="42"/>
    </location>
</feature>
<feature type="strand" evidence="47">
    <location>
        <begin position="53"/>
        <end position="64"/>
    </location>
</feature>
<feature type="strand" evidence="47">
    <location>
        <begin position="67"/>
        <end position="76"/>
    </location>
</feature>
<feature type="helix" evidence="47">
    <location>
        <begin position="80"/>
        <end position="85"/>
    </location>
</feature>
<feature type="helix" evidence="47">
    <location>
        <begin position="86"/>
        <end position="90"/>
    </location>
</feature>
<feature type="strand" evidence="47">
    <location>
        <begin position="94"/>
        <end position="101"/>
    </location>
</feature>
<feature type="helix" evidence="47">
    <location>
        <begin position="105"/>
        <end position="121"/>
    </location>
</feature>
<feature type="strand" evidence="47">
    <location>
        <begin position="127"/>
        <end position="133"/>
    </location>
</feature>
<feature type="helix" evidence="47">
    <location>
        <begin position="135"/>
        <end position="140"/>
    </location>
</feature>
<feature type="helix" evidence="47">
    <location>
        <begin position="145"/>
        <end position="154"/>
    </location>
</feature>
<feature type="strand" evidence="47">
    <location>
        <begin position="158"/>
        <end position="161"/>
    </location>
</feature>
<feature type="turn" evidence="47">
    <location>
        <begin position="164"/>
        <end position="166"/>
    </location>
</feature>
<feature type="helix" evidence="47">
    <location>
        <begin position="170"/>
        <end position="179"/>
    </location>
</feature>
<sequence length="215" mass="23659">MASRGATRPNGPNTGNKICQFKLVLLGESAVGKSSLVLRFVKGQFHEFQESTIGAAFLTQTVCLDDTTVKFEIWDTAGQERYHSLAPMYYRGAQAAIVVYDITNEESFARAKNWVKELQRQASPNIVIALSGNKADLANKRAVDFQEAQSYADDNSLLFMETSAKTSMNVNEIFMAIAKKLPKNEPQNPGANSARGRGVDLTEPTQPTRNQCCSN</sequence>